<sequence>MLTRQQKEAIVKEMTEIFKRSSLALFADFTGFTVADLTELRSRLREKYNGGARFKVVKNTLLTLSLKDAGYEGYEEFLKGPTAVLYVTDGDPVEAVKIIYNFYKEKNADLSKLKGGFLEGRKFSSEEVEKIAKLPSKEELYAMLVGRVKAPISGLVFVLSGILRNLVLVLNAVKEKKSE</sequence>
<comment type="function">
    <text evidence="1">Forms part of the ribosomal stalk, playing a central role in the interaction of the ribosome with GTP-bound translation factors.</text>
</comment>
<comment type="subunit">
    <text evidence="1">Part of the ribosomal stalk of the 50S ribosomal subunit. The N-terminus interacts with L11 and the large rRNA to form the base of the stalk. The C-terminus forms an elongated spine to which L12 dimers bind in a sequential fashion forming a multimeric L10(L12)X complex.</text>
</comment>
<comment type="similarity">
    <text evidence="1">Belongs to the universal ribosomal protein uL10 family.</text>
</comment>
<keyword id="KW-0687">Ribonucleoprotein</keyword>
<keyword id="KW-0689">Ribosomal protein</keyword>
<keyword id="KW-0694">RNA-binding</keyword>
<keyword id="KW-0699">rRNA-binding</keyword>
<dbReference type="EMBL" id="CP000916">
    <property type="protein sequence ID" value="ACM22393.1"/>
    <property type="molecule type" value="Genomic_DNA"/>
</dbReference>
<dbReference type="RefSeq" id="WP_012645103.1">
    <property type="nucleotide sequence ID" value="NC_011978.1"/>
</dbReference>
<dbReference type="SMR" id="B9KBJ7"/>
<dbReference type="STRING" id="309803.CTN_0217"/>
<dbReference type="KEGG" id="tna:CTN_0217"/>
<dbReference type="eggNOG" id="COG0244">
    <property type="taxonomic scope" value="Bacteria"/>
</dbReference>
<dbReference type="HOGENOM" id="CLU_092227_1_2_0"/>
<dbReference type="Proteomes" id="UP000000445">
    <property type="component" value="Chromosome"/>
</dbReference>
<dbReference type="GO" id="GO:0015934">
    <property type="term" value="C:large ribosomal subunit"/>
    <property type="evidence" value="ECO:0007669"/>
    <property type="project" value="InterPro"/>
</dbReference>
<dbReference type="GO" id="GO:0070180">
    <property type="term" value="F:large ribosomal subunit rRNA binding"/>
    <property type="evidence" value="ECO:0007669"/>
    <property type="project" value="UniProtKB-UniRule"/>
</dbReference>
<dbReference type="GO" id="GO:0003735">
    <property type="term" value="F:structural constituent of ribosome"/>
    <property type="evidence" value="ECO:0007669"/>
    <property type="project" value="InterPro"/>
</dbReference>
<dbReference type="GO" id="GO:0006412">
    <property type="term" value="P:translation"/>
    <property type="evidence" value="ECO:0007669"/>
    <property type="project" value="UniProtKB-UniRule"/>
</dbReference>
<dbReference type="CDD" id="cd05797">
    <property type="entry name" value="Ribosomal_L10"/>
    <property type="match status" value="1"/>
</dbReference>
<dbReference type="Gene3D" id="3.30.70.1730">
    <property type="match status" value="1"/>
</dbReference>
<dbReference type="Gene3D" id="6.10.250.290">
    <property type="match status" value="1"/>
</dbReference>
<dbReference type="HAMAP" id="MF_00362">
    <property type="entry name" value="Ribosomal_uL10"/>
    <property type="match status" value="1"/>
</dbReference>
<dbReference type="InterPro" id="IPR001790">
    <property type="entry name" value="Ribosomal_uL10"/>
</dbReference>
<dbReference type="InterPro" id="IPR043141">
    <property type="entry name" value="Ribosomal_uL10-like_sf"/>
</dbReference>
<dbReference type="InterPro" id="IPR022973">
    <property type="entry name" value="Ribosomal_uL10_bac"/>
</dbReference>
<dbReference type="InterPro" id="IPR047865">
    <property type="entry name" value="Ribosomal_uL10_bac_type"/>
</dbReference>
<dbReference type="InterPro" id="IPR002363">
    <property type="entry name" value="Ribosomal_uL10_CS_bac"/>
</dbReference>
<dbReference type="NCBIfam" id="NF000955">
    <property type="entry name" value="PRK00099.1-1"/>
    <property type="match status" value="1"/>
</dbReference>
<dbReference type="PANTHER" id="PTHR11560">
    <property type="entry name" value="39S RIBOSOMAL PROTEIN L10, MITOCHONDRIAL"/>
    <property type="match status" value="1"/>
</dbReference>
<dbReference type="Pfam" id="PF00466">
    <property type="entry name" value="Ribosomal_L10"/>
    <property type="match status" value="1"/>
</dbReference>
<dbReference type="SUPFAM" id="SSF160369">
    <property type="entry name" value="Ribosomal protein L10-like"/>
    <property type="match status" value="1"/>
</dbReference>
<dbReference type="PROSITE" id="PS01109">
    <property type="entry name" value="RIBOSOMAL_L10"/>
    <property type="match status" value="1"/>
</dbReference>
<accession>B9KBJ7</accession>
<evidence type="ECO:0000255" key="1">
    <source>
        <dbReference type="HAMAP-Rule" id="MF_00362"/>
    </source>
</evidence>
<evidence type="ECO:0000305" key="2"/>
<protein>
    <recommendedName>
        <fullName evidence="1">Large ribosomal subunit protein uL10</fullName>
    </recommendedName>
    <alternativeName>
        <fullName evidence="2">50S ribosomal protein L10</fullName>
    </alternativeName>
</protein>
<proteinExistence type="inferred from homology"/>
<reference key="1">
    <citation type="submission" date="2007-11" db="EMBL/GenBank/DDBJ databases">
        <title>The genome sequence of the hyperthermophilic bacterium Thermotoga neapolitana.</title>
        <authorList>
            <person name="Lim S.K."/>
            <person name="Kim J.S."/>
            <person name="Cha S.H."/>
            <person name="Park B.C."/>
            <person name="Lee D.S."/>
            <person name="Tae H.S."/>
            <person name="Kim S.-J."/>
            <person name="Kim J.J."/>
            <person name="Park K.J."/>
            <person name="Lee S.Y."/>
        </authorList>
    </citation>
    <scope>NUCLEOTIDE SEQUENCE [LARGE SCALE GENOMIC DNA]</scope>
    <source>
        <strain>ATCC 49049 / DSM 4359 / NBRC 107923 / NS-E</strain>
    </source>
</reference>
<feature type="chain" id="PRO_1000195573" description="Large ribosomal subunit protein uL10">
    <location>
        <begin position="1"/>
        <end position="179"/>
    </location>
</feature>
<name>RL10_THENN</name>
<gene>
    <name evidence="1" type="primary">rplJ</name>
    <name type="ordered locus">CTN_0217</name>
</gene>
<organism>
    <name type="scientific">Thermotoga neapolitana (strain ATCC 49049 / DSM 4359 / NBRC 107923 / NS-E)</name>
    <dbReference type="NCBI Taxonomy" id="309803"/>
    <lineage>
        <taxon>Bacteria</taxon>
        <taxon>Thermotogati</taxon>
        <taxon>Thermotogota</taxon>
        <taxon>Thermotogae</taxon>
        <taxon>Thermotogales</taxon>
        <taxon>Thermotogaceae</taxon>
        <taxon>Thermotoga</taxon>
    </lineage>
</organism>